<sequence length="742" mass="83900">MAFRGRGGDRGGGGRGRGGGGGFRGRGGSRGGGSRGGDRGGSRGRGRGGDRGASRGRGRGSSRGGARGGFGPRPSKFNDARLADKDEDGSEEDDISEDESNVSEEEIEGSEEEDEEGEEEAQSGQPYMSLLKSFQSATKSKKRKLDHTEEEGPNKATKTEDDDDSDDEDDDEEVKEDVDAVDEPEEDPQDAPLEDLFDEDDDLDDSDPFETHFAAPDEATFQARIKAVQANKWRTDRIAQNSNRIYYNTPETGDSTERKLPHSISGVADLKLKKKLAESMAKHTEFDEAEKAVAPLLFNYQDMLYCNRTVASSESIRRMACLHALNHVFKTRDRVIKNNTKLQRDDTLELRDQGFTRPKVLMLLPTRQSCVKMVEMICEVASPEQQEHRKRFDEGYVDKSTKFSDDKPEDFRDLFSGSDDDMFRLGMKFTRKTIKYFSQFYNSDIIFASPLGLRMAIGSEEEKKKLDYDFLSSIELVIVDQADALLMQNWEHVEFIFEHLNLQPRDAHGCDFSRVRPWYLDDQAKYFRQTVIFSAFNTPELAELQRLHCHNWAGKARLHPEYPGVIQYLGVKTRQTFSRFDAGSIAADPDARFAYFTKAIVPTLVKRAKDAAGTLIFIPSYLDFVRVRNYFANNPDVASVTFGNISEYADTPEASRARSHFLTGRHRVLLYTERAHHFRRYAIKGVKRVIFTKSEQSLMLEHGLGTVKVMFSKYDIMKLERIVGTKRAGKMITEQGDTFDFV</sequence>
<evidence type="ECO:0000250" key="1"/>
<evidence type="ECO:0000256" key="2">
    <source>
        <dbReference type="SAM" id="MobiDB-lite"/>
    </source>
</evidence>
<evidence type="ECO:0000305" key="3"/>
<dbReference type="EMBL" id="CABT02000011">
    <property type="protein sequence ID" value="CCC10131.1"/>
    <property type="molecule type" value="Genomic_DNA"/>
</dbReference>
<dbReference type="RefSeq" id="XP_003352275.1">
    <property type="nucleotide sequence ID" value="XM_003352227.1"/>
</dbReference>
<dbReference type="FunCoup" id="D1Z6B1">
    <property type="interactions" value="1170"/>
</dbReference>
<dbReference type="STRING" id="771870.D1Z6B1"/>
<dbReference type="VEuPathDB" id="FungiDB:SMAC_02709"/>
<dbReference type="eggNOG" id="KOG2340">
    <property type="taxonomic scope" value="Eukaryota"/>
</dbReference>
<dbReference type="HOGENOM" id="CLU_018705_0_1_1"/>
<dbReference type="InParanoid" id="D1Z6B1"/>
<dbReference type="OMA" id="QDRGDTF"/>
<dbReference type="OrthoDB" id="10264378at2759"/>
<dbReference type="Proteomes" id="UP000001881">
    <property type="component" value="Unassembled WGS sequence"/>
</dbReference>
<dbReference type="GO" id="GO:0005730">
    <property type="term" value="C:nucleolus"/>
    <property type="evidence" value="ECO:0007669"/>
    <property type="project" value="UniProtKB-SubCell"/>
</dbReference>
<dbReference type="GO" id="GO:0032040">
    <property type="term" value="C:small-subunit processome"/>
    <property type="evidence" value="ECO:0007669"/>
    <property type="project" value="EnsemblFungi"/>
</dbReference>
<dbReference type="GO" id="GO:0019843">
    <property type="term" value="F:rRNA binding"/>
    <property type="evidence" value="ECO:0007669"/>
    <property type="project" value="EnsemblFungi"/>
</dbReference>
<dbReference type="GO" id="GO:0034511">
    <property type="term" value="F:U3 snoRNA binding"/>
    <property type="evidence" value="ECO:0007669"/>
    <property type="project" value="EnsemblFungi"/>
</dbReference>
<dbReference type="GO" id="GO:0000462">
    <property type="term" value="P:maturation of SSU-rRNA from tricistronic rRNA transcript (SSU-rRNA, 5.8S rRNA, LSU-rRNA)"/>
    <property type="evidence" value="ECO:0007669"/>
    <property type="project" value="EnsemblFungi"/>
</dbReference>
<dbReference type="FunFam" id="3.40.50.300:FF:002356">
    <property type="entry name" value="U3 small nucleolar RNA-associated protein 25"/>
    <property type="match status" value="1"/>
</dbReference>
<dbReference type="Gene3D" id="3.40.50.300">
    <property type="entry name" value="P-loop containing nucleotide triphosphate hydrolases"/>
    <property type="match status" value="1"/>
</dbReference>
<dbReference type="InterPro" id="IPR027417">
    <property type="entry name" value="P-loop_NTPase"/>
</dbReference>
<dbReference type="InterPro" id="IPR010678">
    <property type="entry name" value="UTP25"/>
</dbReference>
<dbReference type="InterPro" id="IPR053939">
    <property type="entry name" value="UTP25_C"/>
</dbReference>
<dbReference type="InterPro" id="IPR053940">
    <property type="entry name" value="UTP25_NTPase-like"/>
</dbReference>
<dbReference type="PANTHER" id="PTHR12933">
    <property type="entry name" value="ORF PROTEIN-RELATED"/>
    <property type="match status" value="1"/>
</dbReference>
<dbReference type="PANTHER" id="PTHR12933:SF0">
    <property type="entry name" value="U3 SMALL NUCLEOLAR RNA-ASSOCIATED PROTEIN 25 HOMOLOG"/>
    <property type="match status" value="1"/>
</dbReference>
<dbReference type="Pfam" id="PF06862">
    <property type="entry name" value="Utp25_C"/>
    <property type="match status" value="1"/>
</dbReference>
<dbReference type="Pfam" id="PF22916">
    <property type="entry name" value="UTP25_NTPase-like"/>
    <property type="match status" value="1"/>
</dbReference>
<dbReference type="SUPFAM" id="SSF52540">
    <property type="entry name" value="P-loop containing nucleoside triphosphate hydrolases"/>
    <property type="match status" value="1"/>
</dbReference>
<name>UTP25_SORMK</name>
<comment type="function">
    <text evidence="1">DEAD-box RNA helicase-like protein required for pre-18S rRNA processing, specifically at sites A0, A1, and A2.</text>
</comment>
<comment type="subunit">
    <text evidence="1">Component of the ribosomal small subunit (SSU) processome composed of at least 40 protein subunits and snoRNA U3.</text>
</comment>
<comment type="subcellular location">
    <subcellularLocation>
        <location evidence="1">Nucleus</location>
        <location evidence="1">Nucleolus</location>
    </subcellularLocation>
</comment>
<comment type="similarity">
    <text evidence="3">Belongs to the UTP25 family.</text>
</comment>
<proteinExistence type="inferred from homology"/>
<keyword id="KW-0539">Nucleus</keyword>
<keyword id="KW-1185">Reference proteome</keyword>
<keyword id="KW-0687">Ribonucleoprotein</keyword>
<keyword id="KW-0690">Ribosome biogenesis</keyword>
<keyword id="KW-0698">rRNA processing</keyword>
<gene>
    <name type="primary">UTP25</name>
    <name type="ORF">SMAC_02709</name>
</gene>
<protein>
    <recommendedName>
        <fullName>U3 small nucleolar RNA-associated protein 25</fullName>
        <shortName>U3 snoRNA-associated protein 25</shortName>
    </recommendedName>
    <alternativeName>
        <fullName>U three protein 25</fullName>
    </alternativeName>
</protein>
<organism>
    <name type="scientific">Sordaria macrospora (strain ATCC MYA-333 / DSM 997 / K(L3346) / K-hell)</name>
    <dbReference type="NCBI Taxonomy" id="771870"/>
    <lineage>
        <taxon>Eukaryota</taxon>
        <taxon>Fungi</taxon>
        <taxon>Dikarya</taxon>
        <taxon>Ascomycota</taxon>
        <taxon>Pezizomycotina</taxon>
        <taxon>Sordariomycetes</taxon>
        <taxon>Sordariomycetidae</taxon>
        <taxon>Sordariales</taxon>
        <taxon>Sordariaceae</taxon>
        <taxon>Sordaria</taxon>
    </lineage>
</organism>
<feature type="chain" id="PRO_0000408140" description="U3 small nucleolar RNA-associated protein 25">
    <location>
        <begin position="1"/>
        <end position="742"/>
    </location>
</feature>
<feature type="region of interest" description="Disordered" evidence="2">
    <location>
        <begin position="1"/>
        <end position="214"/>
    </location>
</feature>
<feature type="compositionally biased region" description="Gly residues" evidence="2">
    <location>
        <begin position="10"/>
        <end position="35"/>
    </location>
</feature>
<feature type="compositionally biased region" description="Basic and acidic residues" evidence="2">
    <location>
        <begin position="36"/>
        <end position="53"/>
    </location>
</feature>
<feature type="compositionally biased region" description="Gly residues" evidence="2">
    <location>
        <begin position="61"/>
        <end position="71"/>
    </location>
</feature>
<feature type="compositionally biased region" description="Acidic residues" evidence="2">
    <location>
        <begin position="85"/>
        <end position="121"/>
    </location>
</feature>
<feature type="compositionally biased region" description="Polar residues" evidence="2">
    <location>
        <begin position="122"/>
        <end position="138"/>
    </location>
</feature>
<feature type="compositionally biased region" description="Basic and acidic residues" evidence="2">
    <location>
        <begin position="146"/>
        <end position="159"/>
    </location>
</feature>
<feature type="compositionally biased region" description="Acidic residues" evidence="2">
    <location>
        <begin position="160"/>
        <end position="208"/>
    </location>
</feature>
<accession>D1Z6B1</accession>
<accession>F7VX89</accession>
<reference key="1">
    <citation type="journal article" date="2010" name="PLoS Genet.">
        <title>De novo assembly of a 40 Mb eukaryotic genome from short sequence reads: Sordaria macrospora, a model organism for fungal morphogenesis.</title>
        <authorList>
            <person name="Nowrousian M."/>
            <person name="Stajich J.E."/>
            <person name="Chu M."/>
            <person name="Engh I."/>
            <person name="Espagne E."/>
            <person name="Halliday K."/>
            <person name="Kamerewerd J."/>
            <person name="Kempken F."/>
            <person name="Knab B."/>
            <person name="Kuo H.-C."/>
            <person name="Osiewacz H.D."/>
            <person name="Poeggeler S."/>
            <person name="Read N.D."/>
            <person name="Seiler S."/>
            <person name="Smith K.M."/>
            <person name="Zickler D."/>
            <person name="Kueck U."/>
            <person name="Freitag M."/>
        </authorList>
    </citation>
    <scope>NUCLEOTIDE SEQUENCE [LARGE SCALE GENOMIC DNA]</scope>
    <source>
        <strain>ATCC MYA-333 / DSM 997 / K(L3346) / K-hell</strain>
    </source>
</reference>